<gene>
    <name type="primary">Hprt1</name>
    <name type="synonym">Hprt</name>
</gene>
<accession>Q64531</accession>
<feature type="initiator methionine" description="Removed">
    <location>
        <position position="1"/>
    </location>
</feature>
<feature type="chain" id="PRO_0000139589" description="Hypoxanthine-guanine phosphoribosyltransferase">
    <location>
        <begin position="2"/>
        <end position="214" status="greater than"/>
    </location>
</feature>
<feature type="active site" description="Proton acceptor" evidence="1">
    <location>
        <position position="138"/>
    </location>
</feature>
<feature type="binding site" evidence="1">
    <location>
        <position position="69"/>
    </location>
    <ligand>
        <name>GMP</name>
        <dbReference type="ChEBI" id="CHEBI:58115"/>
    </ligand>
</feature>
<feature type="binding site" evidence="1">
    <location>
        <begin position="134"/>
        <end position="142"/>
    </location>
    <ligand>
        <name>GMP</name>
        <dbReference type="ChEBI" id="CHEBI:58115"/>
    </ligand>
</feature>
<feature type="binding site" evidence="1">
    <location>
        <position position="166"/>
    </location>
    <ligand>
        <name>GMP</name>
        <dbReference type="ChEBI" id="CHEBI:58115"/>
    </ligand>
</feature>
<feature type="binding site" evidence="1">
    <location>
        <begin position="186"/>
        <end position="188"/>
    </location>
    <ligand>
        <name>GMP</name>
        <dbReference type="ChEBI" id="CHEBI:58115"/>
    </ligand>
</feature>
<feature type="binding site" evidence="1">
    <location>
        <position position="194"/>
    </location>
    <ligand>
        <name>GMP</name>
        <dbReference type="ChEBI" id="CHEBI:58115"/>
    </ligand>
</feature>
<feature type="binding site" evidence="1">
    <location>
        <position position="194"/>
    </location>
    <ligand>
        <name>Mg(2+)</name>
        <dbReference type="ChEBI" id="CHEBI:18420"/>
    </ligand>
</feature>
<feature type="modified residue" description="N-acetylalanine" evidence="2 5">
    <location>
        <position position="2"/>
    </location>
</feature>
<feature type="modified residue" description="N6-acetyllysine" evidence="3">
    <location>
        <position position="103"/>
    </location>
</feature>
<feature type="modified residue" description="Phosphothreonine" evidence="4">
    <location>
        <position position="142"/>
    </location>
</feature>
<feature type="cross-link" description="Glycyl lysine isopeptide (Lys-Gly) (interchain with G-Cter in SUMO1); alternate" evidence="2">
    <location>
        <position position="115"/>
    </location>
</feature>
<feature type="cross-link" description="Glycyl lysine isopeptide (Lys-Gly) (interchain with G-Cter in SUMO2); alternate" evidence="2">
    <location>
        <position position="115"/>
    </location>
</feature>
<feature type="non-terminal residue">
    <location>
        <position position="214"/>
    </location>
</feature>
<proteinExistence type="evidence at protein level"/>
<sequence>MATRSPSVVISDDEPGYDLDLFCIPNHYVEDLEKVFIPHGLIMDRTERLARDVMKEMGGHHIVALCVLKGGYKFFADLLDYIKALNRNSDRSIPMTVDFIRLKSYCNDQSTGDIKVIGGDDLSTLTGKNVLIVEDIIDTGKTMQTLLSLVKQYSPKMVKVASLLVKRTSRSVGYRPDFVGFEIPDKFVVGYALDYNEYFRDLNHVCVISETGKA</sequence>
<organism>
    <name type="scientific">Mus spretus</name>
    <name type="common">Western Mediterranean mouse</name>
    <name type="synonym">Algerian mouse</name>
    <dbReference type="NCBI Taxonomy" id="10096"/>
    <lineage>
        <taxon>Eukaryota</taxon>
        <taxon>Metazoa</taxon>
        <taxon>Chordata</taxon>
        <taxon>Craniata</taxon>
        <taxon>Vertebrata</taxon>
        <taxon>Euteleostomi</taxon>
        <taxon>Mammalia</taxon>
        <taxon>Eutheria</taxon>
        <taxon>Euarchontoglires</taxon>
        <taxon>Glires</taxon>
        <taxon>Rodentia</taxon>
        <taxon>Myomorpha</taxon>
        <taxon>Muroidea</taxon>
        <taxon>Muridae</taxon>
        <taxon>Murinae</taxon>
        <taxon>Mus</taxon>
        <taxon>Mus</taxon>
    </lineage>
</organism>
<evidence type="ECO:0000250" key="1"/>
<evidence type="ECO:0000250" key="2">
    <source>
        <dbReference type="UniProtKB" id="P00492"/>
    </source>
</evidence>
<evidence type="ECO:0000250" key="3">
    <source>
        <dbReference type="UniProtKB" id="P00493"/>
    </source>
</evidence>
<evidence type="ECO:0000250" key="4">
    <source>
        <dbReference type="UniProtKB" id="P27605"/>
    </source>
</evidence>
<evidence type="ECO:0000305" key="5"/>
<keyword id="KW-0007">Acetylation</keyword>
<keyword id="KW-0963">Cytoplasm</keyword>
<keyword id="KW-0903">Direct protein sequencing</keyword>
<keyword id="KW-0328">Glycosyltransferase</keyword>
<keyword id="KW-1017">Isopeptide bond</keyword>
<keyword id="KW-0460">Magnesium</keyword>
<keyword id="KW-0479">Metal-binding</keyword>
<keyword id="KW-0547">Nucleotide-binding</keyword>
<keyword id="KW-0597">Phosphoprotein</keyword>
<keyword id="KW-0660">Purine salvage</keyword>
<keyword id="KW-0808">Transferase</keyword>
<keyword id="KW-0832">Ubl conjugation</keyword>
<dbReference type="EC" id="2.4.2.8" evidence="2"/>
<dbReference type="EMBL" id="M20011">
    <property type="protein sequence ID" value="AAA96234.1"/>
    <property type="molecule type" value="mRNA"/>
</dbReference>
<dbReference type="PIR" id="I49758">
    <property type="entry name" value="I49758"/>
</dbReference>
<dbReference type="SMR" id="Q64531"/>
<dbReference type="MGI" id="MGI:96217">
    <property type="gene designation" value="Hprt1"/>
</dbReference>
<dbReference type="UniPathway" id="UPA00591">
    <property type="reaction ID" value="UER00648"/>
</dbReference>
<dbReference type="GO" id="GO:0005737">
    <property type="term" value="C:cytoplasm"/>
    <property type="evidence" value="ECO:0000250"/>
    <property type="project" value="UniProtKB"/>
</dbReference>
<dbReference type="GO" id="GO:0005829">
    <property type="term" value="C:cytosol"/>
    <property type="evidence" value="ECO:0007669"/>
    <property type="project" value="TreeGrafter"/>
</dbReference>
<dbReference type="GO" id="GO:0052657">
    <property type="term" value="F:guanine phosphoribosyltransferase activity"/>
    <property type="evidence" value="ECO:0000250"/>
    <property type="project" value="UniProtKB"/>
</dbReference>
<dbReference type="GO" id="GO:0004422">
    <property type="term" value="F:hypoxanthine phosphoribosyltransferase activity"/>
    <property type="evidence" value="ECO:0000250"/>
    <property type="project" value="UniProtKB"/>
</dbReference>
<dbReference type="GO" id="GO:0042802">
    <property type="term" value="F:identical protein binding"/>
    <property type="evidence" value="ECO:0000250"/>
    <property type="project" value="UniProtKB"/>
</dbReference>
<dbReference type="GO" id="GO:0000287">
    <property type="term" value="F:magnesium ion binding"/>
    <property type="evidence" value="ECO:0000250"/>
    <property type="project" value="UniProtKB"/>
</dbReference>
<dbReference type="GO" id="GO:0000166">
    <property type="term" value="F:nucleotide binding"/>
    <property type="evidence" value="ECO:0007669"/>
    <property type="project" value="UniProtKB-KW"/>
</dbReference>
<dbReference type="GO" id="GO:0046038">
    <property type="term" value="P:GMP catabolic process"/>
    <property type="evidence" value="ECO:0000250"/>
    <property type="project" value="UniProtKB"/>
</dbReference>
<dbReference type="GO" id="GO:0032263">
    <property type="term" value="P:GMP salvage"/>
    <property type="evidence" value="ECO:0007669"/>
    <property type="project" value="TreeGrafter"/>
</dbReference>
<dbReference type="GO" id="GO:0006178">
    <property type="term" value="P:guanine salvage"/>
    <property type="evidence" value="ECO:0000250"/>
    <property type="project" value="UniProtKB"/>
</dbReference>
<dbReference type="GO" id="GO:0046100">
    <property type="term" value="P:hypoxanthine metabolic process"/>
    <property type="evidence" value="ECO:0000250"/>
    <property type="project" value="UniProtKB"/>
</dbReference>
<dbReference type="GO" id="GO:0043103">
    <property type="term" value="P:hypoxanthine salvage"/>
    <property type="evidence" value="ECO:0000250"/>
    <property type="project" value="UniProtKB"/>
</dbReference>
<dbReference type="GO" id="GO:0046040">
    <property type="term" value="P:IMP metabolic process"/>
    <property type="evidence" value="ECO:0000250"/>
    <property type="project" value="UniProtKB"/>
</dbReference>
<dbReference type="GO" id="GO:0032264">
    <property type="term" value="P:IMP salvage"/>
    <property type="evidence" value="ECO:0007669"/>
    <property type="project" value="UniProtKB-UniPathway"/>
</dbReference>
<dbReference type="GO" id="GO:0045964">
    <property type="term" value="P:positive regulation of dopamine metabolic process"/>
    <property type="evidence" value="ECO:0000250"/>
    <property type="project" value="UniProtKB"/>
</dbReference>
<dbReference type="GO" id="GO:0006164">
    <property type="term" value="P:purine nucleotide biosynthetic process"/>
    <property type="evidence" value="ECO:0000250"/>
    <property type="project" value="UniProtKB"/>
</dbReference>
<dbReference type="GO" id="GO:0006166">
    <property type="term" value="P:purine ribonucleoside salvage"/>
    <property type="evidence" value="ECO:0000250"/>
    <property type="project" value="UniProtKB"/>
</dbReference>
<dbReference type="CDD" id="cd06223">
    <property type="entry name" value="PRTases_typeI"/>
    <property type="match status" value="1"/>
</dbReference>
<dbReference type="FunFam" id="3.40.50.2020:FF:000019">
    <property type="entry name" value="Hypoxanthine phosphoribosyltransferase"/>
    <property type="match status" value="1"/>
</dbReference>
<dbReference type="Gene3D" id="3.40.50.2020">
    <property type="match status" value="1"/>
</dbReference>
<dbReference type="InterPro" id="IPR050408">
    <property type="entry name" value="HGPRT"/>
</dbReference>
<dbReference type="InterPro" id="IPR005904">
    <property type="entry name" value="Hxn_phspho_trans"/>
</dbReference>
<dbReference type="InterPro" id="IPR000836">
    <property type="entry name" value="PRibTrfase_dom"/>
</dbReference>
<dbReference type="InterPro" id="IPR029057">
    <property type="entry name" value="PRTase-like"/>
</dbReference>
<dbReference type="NCBIfam" id="TIGR01203">
    <property type="entry name" value="HGPRTase"/>
    <property type="match status" value="1"/>
</dbReference>
<dbReference type="PANTHER" id="PTHR43340">
    <property type="entry name" value="HYPOXANTHINE-GUANINE PHOSPHORIBOSYLTRANSFERASE"/>
    <property type="match status" value="1"/>
</dbReference>
<dbReference type="PANTHER" id="PTHR43340:SF6">
    <property type="entry name" value="HYPOXANTHINE-GUANINE PHOSPHORIBOSYLTRANSFERASE"/>
    <property type="match status" value="1"/>
</dbReference>
<dbReference type="Pfam" id="PF00156">
    <property type="entry name" value="Pribosyltran"/>
    <property type="match status" value="1"/>
</dbReference>
<dbReference type="SUPFAM" id="SSF53271">
    <property type="entry name" value="PRTase-like"/>
    <property type="match status" value="1"/>
</dbReference>
<dbReference type="PROSITE" id="PS00103">
    <property type="entry name" value="PUR_PYR_PR_TRANSFER"/>
    <property type="match status" value="1"/>
</dbReference>
<comment type="function">
    <text evidence="1">Converts guanine to guanosine monophosphate, and hypoxanthine to inosine monophosphate. Transfers the 5-phosphoribosyl group from 5-phosphoribosylpyrophosphate onto the purine. Plays a central role in the generation of purine nucleotides through the purine salvage pathway (By similarity).</text>
</comment>
<comment type="catalytic activity">
    <reaction evidence="2">
        <text>IMP + diphosphate = hypoxanthine + 5-phospho-alpha-D-ribose 1-diphosphate</text>
        <dbReference type="Rhea" id="RHEA:17973"/>
        <dbReference type="ChEBI" id="CHEBI:17368"/>
        <dbReference type="ChEBI" id="CHEBI:33019"/>
        <dbReference type="ChEBI" id="CHEBI:58017"/>
        <dbReference type="ChEBI" id="CHEBI:58053"/>
        <dbReference type="EC" id="2.4.2.8"/>
    </reaction>
    <physiologicalReaction direction="right-to-left" evidence="2">
        <dbReference type="Rhea" id="RHEA:17975"/>
    </physiologicalReaction>
</comment>
<comment type="catalytic activity">
    <reaction evidence="2">
        <text>GMP + diphosphate = guanine + 5-phospho-alpha-D-ribose 1-diphosphate</text>
        <dbReference type="Rhea" id="RHEA:25424"/>
        <dbReference type="ChEBI" id="CHEBI:16235"/>
        <dbReference type="ChEBI" id="CHEBI:33019"/>
        <dbReference type="ChEBI" id="CHEBI:58017"/>
        <dbReference type="ChEBI" id="CHEBI:58115"/>
        <dbReference type="EC" id="2.4.2.8"/>
    </reaction>
    <physiologicalReaction direction="right-to-left" evidence="2">
        <dbReference type="Rhea" id="RHEA:25426"/>
    </physiologicalReaction>
</comment>
<comment type="cofactor">
    <cofactor evidence="1">
        <name>Mg(2+)</name>
        <dbReference type="ChEBI" id="CHEBI:18420"/>
    </cofactor>
    <text evidence="1">Binds 2 magnesium ions per subunit. The magnesium ions are essentially bound to the substrate and have few direct interactions with the protein.</text>
</comment>
<comment type="pathway">
    <text>Purine metabolism; IMP biosynthesis via salvage pathway; IMP from hypoxanthine: step 1/1.</text>
</comment>
<comment type="subunit">
    <text evidence="1">Homotetramer.</text>
</comment>
<comment type="subcellular location">
    <subcellularLocation>
        <location>Cytoplasm</location>
    </subcellularLocation>
</comment>
<comment type="similarity">
    <text evidence="5">Belongs to the purine/pyrimidine phosphoribosyltransferase family.</text>
</comment>
<protein>
    <recommendedName>
        <fullName>Hypoxanthine-guanine phosphoribosyltransferase</fullName>
        <shortName>HGPRT</shortName>
        <shortName>HGPRTase</shortName>
        <shortName>HPRT A</shortName>
        <ecNumber evidence="2">2.4.2.8</ecNumber>
    </recommendedName>
</protein>
<name>HPRT_MUSSP</name>
<reference key="1">
    <citation type="journal article" date="1988" name="J. Biol. Chem.">
        <title>Altered turnover of allelic variants of hypoxanthine phosphoribosyltransferase is associated with N-terminal amino acid sequence variation.</title>
        <authorList>
            <person name="Johnson G.G."/>
            <person name="Kronert W.A."/>
            <person name="Bernstein S.I."/>
            <person name="Chapman V.M."/>
            <person name="Smith K.D."/>
        </authorList>
    </citation>
    <scope>NUCLEOTIDE SEQUENCE [MRNA]</scope>
    <scope>PARTIAL PROTEIN SEQUENCE</scope>
    <source>
        <tissue>Brain</tissue>
    </source>
</reference>